<protein>
    <recommendedName>
        <fullName evidence="1">Large-conductance mechanosensitive channel</fullName>
    </recommendedName>
</protein>
<evidence type="ECO:0000255" key="1">
    <source>
        <dbReference type="HAMAP-Rule" id="MF_00115"/>
    </source>
</evidence>
<organism>
    <name type="scientific">Methylobacterium radiotolerans (strain ATCC 27329 / DSM 1819 / JCM 2831 / NBRC 15690 / NCIMB 10815 / 0-1)</name>
    <dbReference type="NCBI Taxonomy" id="426355"/>
    <lineage>
        <taxon>Bacteria</taxon>
        <taxon>Pseudomonadati</taxon>
        <taxon>Pseudomonadota</taxon>
        <taxon>Alphaproteobacteria</taxon>
        <taxon>Hyphomicrobiales</taxon>
        <taxon>Methylobacteriaceae</taxon>
        <taxon>Methylobacterium</taxon>
    </lineage>
</organism>
<proteinExistence type="inferred from homology"/>
<reference key="1">
    <citation type="submission" date="2008-03" db="EMBL/GenBank/DDBJ databases">
        <title>Complete sequence of chromosome of Methylobacterium radiotolerans JCM 2831.</title>
        <authorList>
            <consortium name="US DOE Joint Genome Institute"/>
            <person name="Copeland A."/>
            <person name="Lucas S."/>
            <person name="Lapidus A."/>
            <person name="Glavina del Rio T."/>
            <person name="Dalin E."/>
            <person name="Tice H."/>
            <person name="Bruce D."/>
            <person name="Goodwin L."/>
            <person name="Pitluck S."/>
            <person name="Kiss H."/>
            <person name="Brettin T."/>
            <person name="Detter J.C."/>
            <person name="Han C."/>
            <person name="Kuske C.R."/>
            <person name="Schmutz J."/>
            <person name="Larimer F."/>
            <person name="Land M."/>
            <person name="Hauser L."/>
            <person name="Kyrpides N."/>
            <person name="Mikhailova N."/>
            <person name="Marx C.J."/>
            <person name="Richardson P."/>
        </authorList>
    </citation>
    <scope>NUCLEOTIDE SEQUENCE [LARGE SCALE GENOMIC DNA]</scope>
    <source>
        <strain>ATCC 27329 / DSM 1819 / JCM 2831 / NBRC 15690 / NCIMB 10815 / 0-1</strain>
    </source>
</reference>
<accession>B1M0R9</accession>
<name>MSCL_METRJ</name>
<comment type="function">
    <text evidence="1">Channel that opens in response to stretch forces in the membrane lipid bilayer. May participate in the regulation of osmotic pressure changes within the cell.</text>
</comment>
<comment type="subunit">
    <text evidence="1">Homopentamer.</text>
</comment>
<comment type="subcellular location">
    <subcellularLocation>
        <location evidence="1">Cell inner membrane</location>
        <topology evidence="1">Multi-pass membrane protein</topology>
    </subcellularLocation>
</comment>
<comment type="similarity">
    <text evidence="1">Belongs to the MscL family.</text>
</comment>
<keyword id="KW-0997">Cell inner membrane</keyword>
<keyword id="KW-1003">Cell membrane</keyword>
<keyword id="KW-0407">Ion channel</keyword>
<keyword id="KW-0406">Ion transport</keyword>
<keyword id="KW-0472">Membrane</keyword>
<keyword id="KW-0812">Transmembrane</keyword>
<keyword id="KW-1133">Transmembrane helix</keyword>
<keyword id="KW-0813">Transport</keyword>
<feature type="chain" id="PRO_1000094907" description="Large-conductance mechanosensitive channel">
    <location>
        <begin position="1"/>
        <end position="139"/>
    </location>
</feature>
<feature type="transmembrane region" description="Helical" evidence="1">
    <location>
        <begin position="14"/>
        <end position="34"/>
    </location>
</feature>
<feature type="transmembrane region" description="Helical" evidence="1">
    <location>
        <begin position="38"/>
        <end position="58"/>
    </location>
</feature>
<feature type="transmembrane region" description="Helical" evidence="1">
    <location>
        <begin position="82"/>
        <end position="102"/>
    </location>
</feature>
<sequence>MLEEFKKFALRGNVVDLAVGVIIGAAFGAIVNSAVQDIFMPVIGAITGGLDFSNYYIPLSSKVQSGLPYVDAKKQGAVIGYGQFLTLTLNFAIVAFVLFLVIRAMNRLQLAETKKPDEVPADVKLLSEIRDILATKPRV</sequence>
<dbReference type="EMBL" id="CP001001">
    <property type="protein sequence ID" value="ACB23039.1"/>
    <property type="molecule type" value="Genomic_DNA"/>
</dbReference>
<dbReference type="RefSeq" id="WP_012318032.1">
    <property type="nucleotide sequence ID" value="NC_010505.1"/>
</dbReference>
<dbReference type="SMR" id="B1M0R9"/>
<dbReference type="STRING" id="426355.Mrad2831_1030"/>
<dbReference type="GeneID" id="6137047"/>
<dbReference type="KEGG" id="mrd:Mrad2831_1030"/>
<dbReference type="PATRIC" id="fig|426355.14.peg.1072"/>
<dbReference type="eggNOG" id="COG1970">
    <property type="taxonomic scope" value="Bacteria"/>
</dbReference>
<dbReference type="HOGENOM" id="CLU_095787_0_1_5"/>
<dbReference type="OrthoDB" id="9810350at2"/>
<dbReference type="Proteomes" id="UP000006589">
    <property type="component" value="Chromosome"/>
</dbReference>
<dbReference type="GO" id="GO:0005886">
    <property type="term" value="C:plasma membrane"/>
    <property type="evidence" value="ECO:0007669"/>
    <property type="project" value="UniProtKB-SubCell"/>
</dbReference>
<dbReference type="GO" id="GO:0008381">
    <property type="term" value="F:mechanosensitive monoatomic ion channel activity"/>
    <property type="evidence" value="ECO:0007669"/>
    <property type="project" value="UniProtKB-UniRule"/>
</dbReference>
<dbReference type="Gene3D" id="1.10.1200.120">
    <property type="entry name" value="Large-conductance mechanosensitive channel, MscL, domain 1"/>
    <property type="match status" value="1"/>
</dbReference>
<dbReference type="HAMAP" id="MF_00115">
    <property type="entry name" value="MscL"/>
    <property type="match status" value="1"/>
</dbReference>
<dbReference type="InterPro" id="IPR019823">
    <property type="entry name" value="Mechanosensitive_channel_CS"/>
</dbReference>
<dbReference type="InterPro" id="IPR001185">
    <property type="entry name" value="MS_channel"/>
</dbReference>
<dbReference type="InterPro" id="IPR037673">
    <property type="entry name" value="MSC/AndL"/>
</dbReference>
<dbReference type="InterPro" id="IPR036019">
    <property type="entry name" value="MscL_channel"/>
</dbReference>
<dbReference type="NCBIfam" id="TIGR00220">
    <property type="entry name" value="mscL"/>
    <property type="match status" value="1"/>
</dbReference>
<dbReference type="NCBIfam" id="NF001843">
    <property type="entry name" value="PRK00567.1-4"/>
    <property type="match status" value="1"/>
</dbReference>
<dbReference type="NCBIfam" id="NF010557">
    <property type="entry name" value="PRK13952.1"/>
    <property type="match status" value="1"/>
</dbReference>
<dbReference type="PANTHER" id="PTHR30266:SF2">
    <property type="entry name" value="LARGE-CONDUCTANCE MECHANOSENSITIVE CHANNEL"/>
    <property type="match status" value="1"/>
</dbReference>
<dbReference type="PANTHER" id="PTHR30266">
    <property type="entry name" value="MECHANOSENSITIVE CHANNEL MSCL"/>
    <property type="match status" value="1"/>
</dbReference>
<dbReference type="Pfam" id="PF01741">
    <property type="entry name" value="MscL"/>
    <property type="match status" value="1"/>
</dbReference>
<dbReference type="PRINTS" id="PR01264">
    <property type="entry name" value="MECHCHANNEL"/>
</dbReference>
<dbReference type="SUPFAM" id="SSF81330">
    <property type="entry name" value="Gated mechanosensitive channel"/>
    <property type="match status" value="1"/>
</dbReference>
<dbReference type="PROSITE" id="PS01327">
    <property type="entry name" value="MSCL"/>
    <property type="match status" value="1"/>
</dbReference>
<gene>
    <name evidence="1" type="primary">mscL</name>
    <name type="ordered locus">Mrad2831_1030</name>
</gene>